<evidence type="ECO:0000255" key="1">
    <source>
        <dbReference type="HAMAP-Rule" id="MF_00016"/>
    </source>
</evidence>
<protein>
    <recommendedName>
        <fullName evidence="1">Holliday junction branch migration complex subunit RuvB</fullName>
        <ecNumber evidence="1">3.6.4.-</ecNumber>
    </recommendedName>
</protein>
<gene>
    <name evidence="1" type="primary">ruvB</name>
    <name type="ordered locus">SPD_0241</name>
</gene>
<name>RUVB_STRP2</name>
<reference key="1">
    <citation type="journal article" date="2007" name="J. Bacteriol.">
        <title>Genome sequence of Avery's virulent serotype 2 strain D39 of Streptococcus pneumoniae and comparison with that of unencapsulated laboratory strain R6.</title>
        <authorList>
            <person name="Lanie J.A."/>
            <person name="Ng W.-L."/>
            <person name="Kazmierczak K.M."/>
            <person name="Andrzejewski T.M."/>
            <person name="Davidsen T.M."/>
            <person name="Wayne K.J."/>
            <person name="Tettelin H."/>
            <person name="Glass J.I."/>
            <person name="Winkler M.E."/>
        </authorList>
    </citation>
    <scope>NUCLEOTIDE SEQUENCE [LARGE SCALE GENOMIC DNA]</scope>
    <source>
        <strain>D39 / NCTC 7466</strain>
    </source>
</reference>
<organism>
    <name type="scientific">Streptococcus pneumoniae serotype 2 (strain D39 / NCTC 7466)</name>
    <dbReference type="NCBI Taxonomy" id="373153"/>
    <lineage>
        <taxon>Bacteria</taxon>
        <taxon>Bacillati</taxon>
        <taxon>Bacillota</taxon>
        <taxon>Bacilli</taxon>
        <taxon>Lactobacillales</taxon>
        <taxon>Streptococcaceae</taxon>
        <taxon>Streptococcus</taxon>
    </lineage>
</organism>
<sequence>MSRILDNEIMGDEELVERTLRPQYLREYIGQDKVKDQLQIFIEAAKMRDEALDHVLLFGPPGLGKTTMAFVIANELGVNLKQTSGPVIEKAGDLVAILNELEPGDVLFIDEIHRLPMSVEEVLYSAMEDFYIDIMIGAGEGSRSVHLELPPFTLIGATTRAGMLSNPLRARFGITGHMEYYAHADLTEIVERTADIFEMEITHEAASELALRSRGTPRIANRLLKRVRDFAQIMGNGVIDDIITDKALTMLDVDHEGLDYVDQKILRTMIEMYSGGPVGLGTLSVNIAEERETVEDMYEPYLIQKGFIMRTRSGRVATAKAYEHLGYEYSEK</sequence>
<dbReference type="EC" id="3.6.4.-" evidence="1"/>
<dbReference type="EMBL" id="CP000410">
    <property type="protein sequence ID" value="ABJ54102.1"/>
    <property type="molecule type" value="Genomic_DNA"/>
</dbReference>
<dbReference type="RefSeq" id="WP_001809468.1">
    <property type="nucleotide sequence ID" value="NZ_JAMLJR010000002.1"/>
</dbReference>
<dbReference type="SMR" id="Q04MI9"/>
<dbReference type="PaxDb" id="373153-SPD_0241"/>
<dbReference type="GeneID" id="45652263"/>
<dbReference type="KEGG" id="spd:SPD_0241"/>
<dbReference type="eggNOG" id="COG2255">
    <property type="taxonomic scope" value="Bacteria"/>
</dbReference>
<dbReference type="HOGENOM" id="CLU_055599_1_0_9"/>
<dbReference type="BioCyc" id="SPNE373153:G1G6V-265-MONOMER"/>
<dbReference type="Proteomes" id="UP000001452">
    <property type="component" value="Chromosome"/>
</dbReference>
<dbReference type="GO" id="GO:0005737">
    <property type="term" value="C:cytoplasm"/>
    <property type="evidence" value="ECO:0007669"/>
    <property type="project" value="UniProtKB-SubCell"/>
</dbReference>
<dbReference type="GO" id="GO:0048476">
    <property type="term" value="C:Holliday junction resolvase complex"/>
    <property type="evidence" value="ECO:0007669"/>
    <property type="project" value="UniProtKB-UniRule"/>
</dbReference>
<dbReference type="GO" id="GO:0005524">
    <property type="term" value="F:ATP binding"/>
    <property type="evidence" value="ECO:0007669"/>
    <property type="project" value="UniProtKB-UniRule"/>
</dbReference>
<dbReference type="GO" id="GO:0016887">
    <property type="term" value="F:ATP hydrolysis activity"/>
    <property type="evidence" value="ECO:0007669"/>
    <property type="project" value="InterPro"/>
</dbReference>
<dbReference type="GO" id="GO:0000400">
    <property type="term" value="F:four-way junction DNA binding"/>
    <property type="evidence" value="ECO:0007669"/>
    <property type="project" value="UniProtKB-UniRule"/>
</dbReference>
<dbReference type="GO" id="GO:0009378">
    <property type="term" value="F:four-way junction helicase activity"/>
    <property type="evidence" value="ECO:0007669"/>
    <property type="project" value="InterPro"/>
</dbReference>
<dbReference type="GO" id="GO:0006310">
    <property type="term" value="P:DNA recombination"/>
    <property type="evidence" value="ECO:0007669"/>
    <property type="project" value="UniProtKB-UniRule"/>
</dbReference>
<dbReference type="GO" id="GO:0006281">
    <property type="term" value="P:DNA repair"/>
    <property type="evidence" value="ECO:0007669"/>
    <property type="project" value="UniProtKB-UniRule"/>
</dbReference>
<dbReference type="CDD" id="cd00009">
    <property type="entry name" value="AAA"/>
    <property type="match status" value="1"/>
</dbReference>
<dbReference type="Gene3D" id="1.10.8.60">
    <property type="match status" value="1"/>
</dbReference>
<dbReference type="Gene3D" id="3.40.50.300">
    <property type="entry name" value="P-loop containing nucleotide triphosphate hydrolases"/>
    <property type="match status" value="1"/>
</dbReference>
<dbReference type="Gene3D" id="1.10.10.10">
    <property type="entry name" value="Winged helix-like DNA-binding domain superfamily/Winged helix DNA-binding domain"/>
    <property type="match status" value="1"/>
</dbReference>
<dbReference type="HAMAP" id="MF_00016">
    <property type="entry name" value="DNA_HJ_migration_RuvB"/>
    <property type="match status" value="1"/>
</dbReference>
<dbReference type="InterPro" id="IPR003593">
    <property type="entry name" value="AAA+_ATPase"/>
</dbReference>
<dbReference type="InterPro" id="IPR041445">
    <property type="entry name" value="AAA_lid_4"/>
</dbReference>
<dbReference type="InterPro" id="IPR004605">
    <property type="entry name" value="DNA_helicase_Holl-junc_RuvB"/>
</dbReference>
<dbReference type="InterPro" id="IPR027417">
    <property type="entry name" value="P-loop_NTPase"/>
</dbReference>
<dbReference type="InterPro" id="IPR008824">
    <property type="entry name" value="RuvB-like_N"/>
</dbReference>
<dbReference type="InterPro" id="IPR008823">
    <property type="entry name" value="RuvB_C"/>
</dbReference>
<dbReference type="InterPro" id="IPR036388">
    <property type="entry name" value="WH-like_DNA-bd_sf"/>
</dbReference>
<dbReference type="InterPro" id="IPR036390">
    <property type="entry name" value="WH_DNA-bd_sf"/>
</dbReference>
<dbReference type="NCBIfam" id="NF000868">
    <property type="entry name" value="PRK00080.1"/>
    <property type="match status" value="1"/>
</dbReference>
<dbReference type="NCBIfam" id="TIGR00635">
    <property type="entry name" value="ruvB"/>
    <property type="match status" value="1"/>
</dbReference>
<dbReference type="PANTHER" id="PTHR42848">
    <property type="match status" value="1"/>
</dbReference>
<dbReference type="PANTHER" id="PTHR42848:SF1">
    <property type="entry name" value="HOLLIDAY JUNCTION BRANCH MIGRATION COMPLEX SUBUNIT RUVB"/>
    <property type="match status" value="1"/>
</dbReference>
<dbReference type="Pfam" id="PF17864">
    <property type="entry name" value="AAA_lid_4"/>
    <property type="match status" value="1"/>
</dbReference>
<dbReference type="Pfam" id="PF05491">
    <property type="entry name" value="RuvB_C"/>
    <property type="match status" value="1"/>
</dbReference>
<dbReference type="Pfam" id="PF05496">
    <property type="entry name" value="RuvB_N"/>
    <property type="match status" value="1"/>
</dbReference>
<dbReference type="SMART" id="SM00382">
    <property type="entry name" value="AAA"/>
    <property type="match status" value="1"/>
</dbReference>
<dbReference type="SUPFAM" id="SSF52540">
    <property type="entry name" value="P-loop containing nucleoside triphosphate hydrolases"/>
    <property type="match status" value="1"/>
</dbReference>
<dbReference type="SUPFAM" id="SSF46785">
    <property type="entry name" value="Winged helix' DNA-binding domain"/>
    <property type="match status" value="1"/>
</dbReference>
<comment type="function">
    <text evidence="1">The RuvA-RuvB-RuvC complex processes Holliday junction (HJ) DNA during genetic recombination and DNA repair, while the RuvA-RuvB complex plays an important role in the rescue of blocked DNA replication forks via replication fork reversal (RFR). RuvA specifically binds to HJ cruciform DNA, conferring on it an open structure. The RuvB hexamer acts as an ATP-dependent pump, pulling dsDNA into and through the RuvAB complex. RuvB forms 2 homohexamers on either side of HJ DNA bound by 1 or 2 RuvA tetramers; 4 subunits per hexamer contact DNA at a time. Coordinated motions by a converter formed by DNA-disengaged RuvB subunits stimulates ATP hydrolysis and nucleotide exchange. Immobilization of the converter enables RuvB to convert the ATP-contained energy into a lever motion, pulling 2 nucleotides of DNA out of the RuvA tetramer per ATP hydrolyzed, thus driving DNA branch migration. The RuvB motors rotate together with the DNA substrate, which together with the progressing nucleotide cycle form the mechanistic basis for DNA recombination by continuous HJ branch migration. Branch migration allows RuvC to scan DNA until it finds its consensus sequence, where it cleaves and resolves cruciform DNA.</text>
</comment>
<comment type="catalytic activity">
    <reaction evidence="1">
        <text>ATP + H2O = ADP + phosphate + H(+)</text>
        <dbReference type="Rhea" id="RHEA:13065"/>
        <dbReference type="ChEBI" id="CHEBI:15377"/>
        <dbReference type="ChEBI" id="CHEBI:15378"/>
        <dbReference type="ChEBI" id="CHEBI:30616"/>
        <dbReference type="ChEBI" id="CHEBI:43474"/>
        <dbReference type="ChEBI" id="CHEBI:456216"/>
    </reaction>
</comment>
<comment type="subunit">
    <text evidence="1">Homohexamer. Forms an RuvA(8)-RuvB(12)-Holliday junction (HJ) complex. HJ DNA is sandwiched between 2 RuvA tetramers; dsDNA enters through RuvA and exits via RuvB. An RuvB hexamer assembles on each DNA strand where it exits the tetramer. Each RuvB hexamer is contacted by two RuvA subunits (via domain III) on 2 adjacent RuvB subunits; this complex drives branch migration. In the full resolvosome a probable DNA-RuvA(4)-RuvB(12)-RuvC(2) complex forms which resolves the HJ.</text>
</comment>
<comment type="subcellular location">
    <subcellularLocation>
        <location evidence="1">Cytoplasm</location>
    </subcellularLocation>
</comment>
<comment type="domain">
    <text evidence="1">Has 3 domains, the large (RuvB-L) and small ATPase (RuvB-S) domains and the C-terminal head (RuvB-H) domain. The head domain binds DNA, while the ATPase domains jointly bind ATP, ADP or are empty depending on the state of the subunit in the translocation cycle. During a single DNA translocation step the structure of each domain remains the same, but their relative positions change.</text>
</comment>
<comment type="similarity">
    <text evidence="1">Belongs to the RuvB family.</text>
</comment>
<proteinExistence type="inferred from homology"/>
<accession>Q04MI9</accession>
<feature type="chain" id="PRO_1000001485" description="Holliday junction branch migration complex subunit RuvB">
    <location>
        <begin position="1"/>
        <end position="332"/>
    </location>
</feature>
<feature type="region of interest" description="Large ATPase domain (RuvB-L)" evidence="1">
    <location>
        <begin position="1"/>
        <end position="181"/>
    </location>
</feature>
<feature type="region of interest" description="Small ATPAse domain (RuvB-S)" evidence="1">
    <location>
        <begin position="182"/>
        <end position="252"/>
    </location>
</feature>
<feature type="region of interest" description="Head domain (RuvB-H)" evidence="1">
    <location>
        <begin position="255"/>
        <end position="332"/>
    </location>
</feature>
<feature type="binding site" evidence="1">
    <location>
        <position position="20"/>
    </location>
    <ligand>
        <name>ATP</name>
        <dbReference type="ChEBI" id="CHEBI:30616"/>
    </ligand>
</feature>
<feature type="binding site" evidence="1">
    <location>
        <position position="21"/>
    </location>
    <ligand>
        <name>ATP</name>
        <dbReference type="ChEBI" id="CHEBI:30616"/>
    </ligand>
</feature>
<feature type="binding site" evidence="1">
    <location>
        <position position="62"/>
    </location>
    <ligand>
        <name>ATP</name>
        <dbReference type="ChEBI" id="CHEBI:30616"/>
    </ligand>
</feature>
<feature type="binding site" evidence="1">
    <location>
        <position position="65"/>
    </location>
    <ligand>
        <name>ATP</name>
        <dbReference type="ChEBI" id="CHEBI:30616"/>
    </ligand>
</feature>
<feature type="binding site" evidence="1">
    <location>
        <position position="66"/>
    </location>
    <ligand>
        <name>ATP</name>
        <dbReference type="ChEBI" id="CHEBI:30616"/>
    </ligand>
</feature>
<feature type="binding site" evidence="1">
    <location>
        <position position="66"/>
    </location>
    <ligand>
        <name>Mg(2+)</name>
        <dbReference type="ChEBI" id="CHEBI:18420"/>
    </ligand>
</feature>
<feature type="binding site" evidence="1">
    <location>
        <position position="67"/>
    </location>
    <ligand>
        <name>ATP</name>
        <dbReference type="ChEBI" id="CHEBI:30616"/>
    </ligand>
</feature>
<feature type="binding site" evidence="1">
    <location>
        <begin position="128"/>
        <end position="130"/>
    </location>
    <ligand>
        <name>ATP</name>
        <dbReference type="ChEBI" id="CHEBI:30616"/>
    </ligand>
</feature>
<feature type="binding site" evidence="1">
    <location>
        <position position="171"/>
    </location>
    <ligand>
        <name>ATP</name>
        <dbReference type="ChEBI" id="CHEBI:30616"/>
    </ligand>
</feature>
<feature type="binding site" evidence="1">
    <location>
        <position position="181"/>
    </location>
    <ligand>
        <name>ATP</name>
        <dbReference type="ChEBI" id="CHEBI:30616"/>
    </ligand>
</feature>
<feature type="binding site" evidence="1">
    <location>
        <position position="218"/>
    </location>
    <ligand>
        <name>ATP</name>
        <dbReference type="ChEBI" id="CHEBI:30616"/>
    </ligand>
</feature>
<feature type="binding site" evidence="1">
    <location>
        <position position="291"/>
    </location>
    <ligand>
        <name>DNA</name>
        <dbReference type="ChEBI" id="CHEBI:16991"/>
    </ligand>
</feature>
<feature type="binding site" evidence="1">
    <location>
        <position position="310"/>
    </location>
    <ligand>
        <name>DNA</name>
        <dbReference type="ChEBI" id="CHEBI:16991"/>
    </ligand>
</feature>
<feature type="binding site" evidence="1">
    <location>
        <position position="312"/>
    </location>
    <ligand>
        <name>DNA</name>
        <dbReference type="ChEBI" id="CHEBI:16991"/>
    </ligand>
</feature>
<feature type="binding site" evidence="1">
    <location>
        <position position="315"/>
    </location>
    <ligand>
        <name>DNA</name>
        <dbReference type="ChEBI" id="CHEBI:16991"/>
    </ligand>
</feature>
<keyword id="KW-0067">ATP-binding</keyword>
<keyword id="KW-0963">Cytoplasm</keyword>
<keyword id="KW-0227">DNA damage</keyword>
<keyword id="KW-0233">DNA recombination</keyword>
<keyword id="KW-0234">DNA repair</keyword>
<keyword id="KW-0238">DNA-binding</keyword>
<keyword id="KW-0378">Hydrolase</keyword>
<keyword id="KW-0547">Nucleotide-binding</keyword>
<keyword id="KW-1185">Reference proteome</keyword>